<evidence type="ECO:0000255" key="1"/>
<evidence type="ECO:0000305" key="2"/>
<proteinExistence type="predicted"/>
<organism>
    <name type="scientific">Bacillus subtilis (strain 168)</name>
    <dbReference type="NCBI Taxonomy" id="224308"/>
    <lineage>
        <taxon>Bacteria</taxon>
        <taxon>Bacillati</taxon>
        <taxon>Bacillota</taxon>
        <taxon>Bacilli</taxon>
        <taxon>Bacillales</taxon>
        <taxon>Bacillaceae</taxon>
        <taxon>Bacillus</taxon>
    </lineage>
</organism>
<feature type="chain" id="PRO_0000049935" description="Uncharacterized protein YvaD">
    <location>
        <begin position="1"/>
        <end position="133"/>
    </location>
</feature>
<feature type="transmembrane region" description="Helical" evidence="1">
    <location>
        <begin position="5"/>
        <end position="27"/>
    </location>
</feature>
<feature type="transmembrane region" description="Helical" evidence="1">
    <location>
        <begin position="42"/>
        <end position="64"/>
    </location>
</feature>
<feature type="transmembrane region" description="Helical" evidence="1">
    <location>
        <begin position="77"/>
        <end position="99"/>
    </location>
</feature>
<feature type="transmembrane region" description="Helical" evidence="1">
    <location>
        <begin position="103"/>
        <end position="125"/>
    </location>
</feature>
<protein>
    <recommendedName>
        <fullName>Uncharacterized protein YvaD</fullName>
    </recommendedName>
</protein>
<sequence length="133" mass="15862">MRYMKLFFLVTDIGFILYWLSAGFSLIPESWAFKHHDHPFMIAWNWSFFPLDILISVTGLYSLYLQRVNRADWKLMALISLVLTCCSGLQALSFWTFSSDFDLVWWLFNGYLLIYPLFFIHLLLKEGRRTKQS</sequence>
<name>YVAD_BACSU</name>
<dbReference type="EMBL" id="AL009126">
    <property type="protein sequence ID" value="CAB15361.1"/>
    <property type="molecule type" value="Genomic_DNA"/>
</dbReference>
<dbReference type="PIR" id="B70027">
    <property type="entry name" value="B70027"/>
</dbReference>
<dbReference type="RefSeq" id="NP_391236.1">
    <property type="nucleotide sequence ID" value="NC_000964.3"/>
</dbReference>
<dbReference type="RefSeq" id="WP_003242541.1">
    <property type="nucleotide sequence ID" value="NZ_OZ025638.1"/>
</dbReference>
<dbReference type="FunCoup" id="O32226">
    <property type="interactions" value="32"/>
</dbReference>
<dbReference type="STRING" id="224308.BSU33560"/>
<dbReference type="PaxDb" id="224308-BSU33560"/>
<dbReference type="EnsemblBacteria" id="CAB15361">
    <property type="protein sequence ID" value="CAB15361"/>
    <property type="gene ID" value="BSU_33560"/>
</dbReference>
<dbReference type="GeneID" id="936144"/>
<dbReference type="KEGG" id="bsu:BSU33560"/>
<dbReference type="PATRIC" id="fig|224308.179.peg.3641"/>
<dbReference type="eggNOG" id="ENOG5030S65">
    <property type="taxonomic scope" value="Bacteria"/>
</dbReference>
<dbReference type="InParanoid" id="O32226"/>
<dbReference type="OrthoDB" id="2469007at2"/>
<dbReference type="BioCyc" id="BSUB:BSU33560-MONOMER"/>
<dbReference type="Proteomes" id="UP000001570">
    <property type="component" value="Chromosome"/>
</dbReference>
<dbReference type="GO" id="GO:0005886">
    <property type="term" value="C:plasma membrane"/>
    <property type="evidence" value="ECO:0007669"/>
    <property type="project" value="UniProtKB-SubCell"/>
</dbReference>
<dbReference type="InterPro" id="IPR020348">
    <property type="entry name" value="Uncharacterised_YvaD"/>
</dbReference>
<dbReference type="Pfam" id="PF17314">
    <property type="entry name" value="DUF5360"/>
    <property type="match status" value="1"/>
</dbReference>
<gene>
    <name type="primary">yvaD</name>
    <name type="ordered locus">BSU33560</name>
</gene>
<comment type="subcellular location">
    <subcellularLocation>
        <location evidence="2">Cell membrane</location>
        <topology evidence="2">Multi-pass membrane protein</topology>
    </subcellularLocation>
</comment>
<accession>O32226</accession>
<keyword id="KW-1003">Cell membrane</keyword>
<keyword id="KW-0472">Membrane</keyword>
<keyword id="KW-1185">Reference proteome</keyword>
<keyword id="KW-0812">Transmembrane</keyword>
<keyword id="KW-1133">Transmembrane helix</keyword>
<reference key="1">
    <citation type="journal article" date="1997" name="Nature">
        <title>The complete genome sequence of the Gram-positive bacterium Bacillus subtilis.</title>
        <authorList>
            <person name="Kunst F."/>
            <person name="Ogasawara N."/>
            <person name="Moszer I."/>
            <person name="Albertini A.M."/>
            <person name="Alloni G."/>
            <person name="Azevedo V."/>
            <person name="Bertero M.G."/>
            <person name="Bessieres P."/>
            <person name="Bolotin A."/>
            <person name="Borchert S."/>
            <person name="Borriss R."/>
            <person name="Boursier L."/>
            <person name="Brans A."/>
            <person name="Braun M."/>
            <person name="Brignell S.C."/>
            <person name="Bron S."/>
            <person name="Brouillet S."/>
            <person name="Bruschi C.V."/>
            <person name="Caldwell B."/>
            <person name="Capuano V."/>
            <person name="Carter N.M."/>
            <person name="Choi S.-K."/>
            <person name="Codani J.-J."/>
            <person name="Connerton I.F."/>
            <person name="Cummings N.J."/>
            <person name="Daniel R.A."/>
            <person name="Denizot F."/>
            <person name="Devine K.M."/>
            <person name="Duesterhoeft A."/>
            <person name="Ehrlich S.D."/>
            <person name="Emmerson P.T."/>
            <person name="Entian K.-D."/>
            <person name="Errington J."/>
            <person name="Fabret C."/>
            <person name="Ferrari E."/>
            <person name="Foulger D."/>
            <person name="Fritz C."/>
            <person name="Fujita M."/>
            <person name="Fujita Y."/>
            <person name="Fuma S."/>
            <person name="Galizzi A."/>
            <person name="Galleron N."/>
            <person name="Ghim S.-Y."/>
            <person name="Glaser P."/>
            <person name="Goffeau A."/>
            <person name="Golightly E.J."/>
            <person name="Grandi G."/>
            <person name="Guiseppi G."/>
            <person name="Guy B.J."/>
            <person name="Haga K."/>
            <person name="Haiech J."/>
            <person name="Harwood C.R."/>
            <person name="Henaut A."/>
            <person name="Hilbert H."/>
            <person name="Holsappel S."/>
            <person name="Hosono S."/>
            <person name="Hullo M.-F."/>
            <person name="Itaya M."/>
            <person name="Jones L.-M."/>
            <person name="Joris B."/>
            <person name="Karamata D."/>
            <person name="Kasahara Y."/>
            <person name="Klaerr-Blanchard M."/>
            <person name="Klein C."/>
            <person name="Kobayashi Y."/>
            <person name="Koetter P."/>
            <person name="Koningstein G."/>
            <person name="Krogh S."/>
            <person name="Kumano M."/>
            <person name="Kurita K."/>
            <person name="Lapidus A."/>
            <person name="Lardinois S."/>
            <person name="Lauber J."/>
            <person name="Lazarevic V."/>
            <person name="Lee S.-M."/>
            <person name="Levine A."/>
            <person name="Liu H."/>
            <person name="Masuda S."/>
            <person name="Mauel C."/>
            <person name="Medigue C."/>
            <person name="Medina N."/>
            <person name="Mellado R.P."/>
            <person name="Mizuno M."/>
            <person name="Moestl D."/>
            <person name="Nakai S."/>
            <person name="Noback M."/>
            <person name="Noone D."/>
            <person name="O'Reilly M."/>
            <person name="Ogawa K."/>
            <person name="Ogiwara A."/>
            <person name="Oudega B."/>
            <person name="Park S.-H."/>
            <person name="Parro V."/>
            <person name="Pohl T.M."/>
            <person name="Portetelle D."/>
            <person name="Porwollik S."/>
            <person name="Prescott A.M."/>
            <person name="Presecan E."/>
            <person name="Pujic P."/>
            <person name="Purnelle B."/>
            <person name="Rapoport G."/>
            <person name="Rey M."/>
            <person name="Reynolds S."/>
            <person name="Rieger M."/>
            <person name="Rivolta C."/>
            <person name="Rocha E."/>
            <person name="Roche B."/>
            <person name="Rose M."/>
            <person name="Sadaie Y."/>
            <person name="Sato T."/>
            <person name="Scanlan E."/>
            <person name="Schleich S."/>
            <person name="Schroeter R."/>
            <person name="Scoffone F."/>
            <person name="Sekiguchi J."/>
            <person name="Sekowska A."/>
            <person name="Seror S.J."/>
            <person name="Serror P."/>
            <person name="Shin B.-S."/>
            <person name="Soldo B."/>
            <person name="Sorokin A."/>
            <person name="Tacconi E."/>
            <person name="Takagi T."/>
            <person name="Takahashi H."/>
            <person name="Takemaru K."/>
            <person name="Takeuchi M."/>
            <person name="Tamakoshi A."/>
            <person name="Tanaka T."/>
            <person name="Terpstra P."/>
            <person name="Tognoni A."/>
            <person name="Tosato V."/>
            <person name="Uchiyama S."/>
            <person name="Vandenbol M."/>
            <person name="Vannier F."/>
            <person name="Vassarotti A."/>
            <person name="Viari A."/>
            <person name="Wambutt R."/>
            <person name="Wedler E."/>
            <person name="Wedler H."/>
            <person name="Weitzenegger T."/>
            <person name="Winters P."/>
            <person name="Wipat A."/>
            <person name="Yamamoto H."/>
            <person name="Yamane K."/>
            <person name="Yasumoto K."/>
            <person name="Yata K."/>
            <person name="Yoshida K."/>
            <person name="Yoshikawa H.-F."/>
            <person name="Zumstein E."/>
            <person name="Yoshikawa H."/>
            <person name="Danchin A."/>
        </authorList>
    </citation>
    <scope>NUCLEOTIDE SEQUENCE [LARGE SCALE GENOMIC DNA]</scope>
    <source>
        <strain>168</strain>
    </source>
</reference>